<keyword id="KW-0472">Membrane</keyword>
<keyword id="KW-0812">Transmembrane</keyword>
<keyword id="KW-1133">Transmembrane helix</keyword>
<protein>
    <recommendedName>
        <fullName evidence="1">UPF0154 protein M6_Spy0328</fullName>
    </recommendedName>
</protein>
<evidence type="ECO:0000255" key="1">
    <source>
        <dbReference type="HAMAP-Rule" id="MF_00363"/>
    </source>
</evidence>
<proteinExistence type="inferred from homology"/>
<organism>
    <name type="scientific">Streptococcus pyogenes serotype M6 (strain ATCC BAA-946 / MGAS10394)</name>
    <dbReference type="NCBI Taxonomy" id="286636"/>
    <lineage>
        <taxon>Bacteria</taxon>
        <taxon>Bacillati</taxon>
        <taxon>Bacillota</taxon>
        <taxon>Bacilli</taxon>
        <taxon>Lactobacillales</taxon>
        <taxon>Streptococcaceae</taxon>
        <taxon>Streptococcus</taxon>
    </lineage>
</organism>
<feature type="chain" id="PRO_0000214990" description="UPF0154 protein M6_Spy0328">
    <location>
        <begin position="1"/>
        <end position="80"/>
    </location>
</feature>
<feature type="transmembrane region" description="Helical" evidence="1">
    <location>
        <begin position="4"/>
        <end position="24"/>
    </location>
</feature>
<sequence length="80" mass="8894">MSTAIWILLLIVALGVGVFGGIFIARKQIEKEIGEHPRLTPEAIREMMSQMGQKPSEAKIQQTYRNIIKQSKAAVSKGKK</sequence>
<accession>Q5XDQ0</accession>
<comment type="subcellular location">
    <subcellularLocation>
        <location evidence="1">Membrane</location>
        <topology evidence="1">Single-pass membrane protein</topology>
    </subcellularLocation>
</comment>
<comment type="similarity">
    <text evidence="1">Belongs to the UPF0154 family.</text>
</comment>
<gene>
    <name type="ordered locus">M6_Spy0328</name>
</gene>
<dbReference type="EMBL" id="CP000003">
    <property type="protein sequence ID" value="AAT86463.1"/>
    <property type="molecule type" value="Genomic_DNA"/>
</dbReference>
<dbReference type="RefSeq" id="WP_002985908.1">
    <property type="nucleotide sequence ID" value="NC_006086.1"/>
</dbReference>
<dbReference type="SMR" id="Q5XDQ0"/>
<dbReference type="KEGG" id="spa:M6_Spy0328"/>
<dbReference type="HOGENOM" id="CLU_180108_0_0_9"/>
<dbReference type="Proteomes" id="UP000001167">
    <property type="component" value="Chromosome"/>
</dbReference>
<dbReference type="GO" id="GO:0005886">
    <property type="term" value="C:plasma membrane"/>
    <property type="evidence" value="ECO:0007669"/>
    <property type="project" value="UniProtKB-UniRule"/>
</dbReference>
<dbReference type="HAMAP" id="MF_00363">
    <property type="entry name" value="UPF0154"/>
    <property type="match status" value="1"/>
</dbReference>
<dbReference type="InterPro" id="IPR005359">
    <property type="entry name" value="UPF0154"/>
</dbReference>
<dbReference type="Pfam" id="PF03672">
    <property type="entry name" value="UPF0154"/>
    <property type="match status" value="1"/>
</dbReference>
<reference key="1">
    <citation type="journal article" date="2004" name="J. Infect. Dis.">
        <title>Progress toward characterization of the group A Streptococcus metagenome: complete genome sequence of a macrolide-resistant serotype M6 strain.</title>
        <authorList>
            <person name="Banks D.J."/>
            <person name="Porcella S.F."/>
            <person name="Barbian K.D."/>
            <person name="Beres S.B."/>
            <person name="Philips L.E."/>
            <person name="Voyich J.M."/>
            <person name="DeLeo F.R."/>
            <person name="Martin J.M."/>
            <person name="Somerville G.A."/>
            <person name="Musser J.M."/>
        </authorList>
    </citation>
    <scope>NUCLEOTIDE SEQUENCE [LARGE SCALE GENOMIC DNA]</scope>
    <source>
        <strain>ATCC BAA-946 / MGAS10394</strain>
    </source>
</reference>
<name>Y328_STRP6</name>